<keyword id="KW-0002">3D-structure</keyword>
<keyword id="KW-0007">Acetylation</keyword>
<keyword id="KW-0025">Alternative splicing</keyword>
<keyword id="KW-0072">Autophagy</keyword>
<keyword id="KW-0963">Cytoplasm</keyword>
<keyword id="KW-1017">Isopeptide bond</keyword>
<keyword id="KW-0653">Protein transport</keyword>
<keyword id="KW-1267">Proteomics identification</keyword>
<keyword id="KW-1185">Reference proteome</keyword>
<keyword id="KW-0808">Transferase</keyword>
<keyword id="KW-0813">Transport</keyword>
<keyword id="KW-0832">Ubl conjugation</keyword>
<keyword id="KW-0833">Ubl conjugation pathway</keyword>
<name>ATG3_HUMAN</name>
<accession>Q9NT62</accession>
<accession>C9JNW8</accession>
<accession>Q6PKC5</accession>
<accession>Q9H6L9</accession>
<proteinExistence type="evidence at protein level"/>
<comment type="function">
    <text evidence="1 3 4 5 6 10 11 13 14 15">E2 conjugating enzyme that catalyzes the covalent conjugation of the C-terminal Gly of ATG8-like proteins (GABARAP, GABARAPL1, GABARAPL2 or MAP1LC3A) to the amino group of phosphatidylethanolamine (PE)-containing lipids in the membrane resulting in membrane-bound ATG8-like proteins which is one of the key steps in the development of autophagic isolation membranes during autophagosome formation (PubMed:24191030, PubMed:33446636, PubMed:37252361). Cycles back and forth between binding to ATG7 for loading with the ATG8-like proteins and binding to E3 enzyme, composed of ATG12, ATG5 and ATG16L1 to promote ATG8-like proteins lipidation (PubMed:11825910, PubMed:12207896, PubMed:12890687, PubMed:16704426, PubMed:24186333). Also plays a role as a membrane curvature sensor that facilitates LC3/GABARAP lipidation by sensing local membrane stress associated with lipid-packing defects as occurs with high molar proportions of conical lipids or strident membrane curvature (By similarity). Interacts with negatively-charged membranes promoting membrane tethering and enhancing LC3/GABARAP lipidation (PubMed:29142222). Also acts as an autocatalytic E2-like enzyme by catalyzing the conjugation of ATG12 to itself in an ATG7-dependent manner, this complex thus formed, plays a role in mitochondrial homeostasis but not in autophagy (By similarity). ATG12-ATG3 conjugation promotes late endosome to lysosome trafficking and basal autophagosome maturation via its interaction with PDCD6IP (By similarity). ATG12-ATG3 conjugate is also formed upon viccina virus infection, leading to the disruption the cellular autophagy which is not necessary for vaccinia survival and proliferation (By similarity). Promotes primary ciliogenesis by removing OFD1 from centriolar satellites via the autophagic pathway (By similarity).</text>
</comment>
<comment type="subunit">
    <text evidence="1 3 4 7 8 10 11 12 15">Homdimer (PubMed:24191030). Interacts with ATG7; this interaction forms an E1-E2 complex that is essential for the transfer of GABARAP thioester from ATG7 to ATG3 and disrupts interaction with the E3 enzyme complex (PubMed:11825910, PubMed:22170151, PubMed:24186333, PubMed:26043688, PubMed:37252361). Interacts with ATG12; this interaction is ATG7-dependent, essential for phosphatidylethanolamine (PE)-conjugated ATG8-like proteins formation and also mediates the autoconjugation of ATG12 on ATG3 (PubMed:11825910, PubMed:12207896, PubMed:22170151, PubMed:24191030). Interacts with FNBP1L (PubMed:19342671). Interacts with the E3 enzyme complex composed of 4 sets of ATG12-ATG5 and ATG16L1 (400 kDa); this interaction disrupts interaction with ATG7 and promotes ATG8-like proteins lipidation (PubMed:24186333, PubMed:24191030, PubMed:37252361). Interacts with GABARAP and MAP1LC3A (PubMed:37252361). Interacts with the ATG12-ATG5 conjugate; this interaction inhibits ATG8-like proteins lipidation (PubMed:12207896). Interacts (ATG12-ATG3 conjugate form) with PDCD6IP (via the BRO1 domain); this interaction is bridged by ATG12 and promotes multiple PDCD6IP-mediated functions such as endolysosomal trafficking, macroautophagy and exosome biogenesis (By similarity).</text>
</comment>
<comment type="interaction">
    <interactant intactId="EBI-988094">
        <id>Q9NT62</id>
    </interactant>
    <interactant intactId="EBI-746742">
        <id>O94817</id>
        <label>ATG12</label>
    </interactant>
    <organismsDiffer>false</organismsDiffer>
    <experiments>9</experiments>
</comment>
<comment type="interaction">
    <interactant intactId="EBI-988094">
        <id>Q9NT62</id>
    </interactant>
    <interactant intactId="EBI-712001">
        <id>O95166</id>
        <label>GABARAP</label>
    </interactant>
    <organismsDiffer>false</organismsDiffer>
    <experiments>5</experiments>
</comment>
<comment type="interaction">
    <interactant intactId="EBI-988094">
        <id>Q9NT62</id>
    </interactant>
    <interactant intactId="EBI-746969">
        <id>Q9H0R8</id>
        <label>GABARAPL1</label>
    </interactant>
    <organismsDiffer>false</organismsDiffer>
    <experiments>3</experiments>
</comment>
<comment type="interaction">
    <interactant intactId="EBI-988094">
        <id>Q9NT62</id>
    </interactant>
    <interactant intactId="EBI-720116">
        <id>P60520</id>
        <label>GABARAPL2</label>
    </interactant>
    <organismsDiffer>false</organismsDiffer>
    <experiments>7</experiments>
</comment>
<comment type="interaction">
    <interactant intactId="EBI-988094">
        <id>Q9NT62</id>
    </interactant>
    <interactant intactId="EBI-356942">
        <id>P62879</id>
        <label>GNB2</label>
    </interactant>
    <organismsDiffer>false</organismsDiffer>
    <experiments>3</experiments>
</comment>
<comment type="interaction">
    <interactant intactId="EBI-988094">
        <id>Q9NT62</id>
    </interactant>
    <interactant intactId="EBI-373144">
        <id>Q9GZQ8</id>
        <label>MAP1LC3B</label>
    </interactant>
    <organismsDiffer>false</organismsDiffer>
    <experiments>8</experiments>
</comment>
<comment type="interaction">
    <interactant intactId="EBI-988094">
        <id>Q9NT62</id>
    </interactant>
    <interactant intactId="EBI-2558739">
        <id>Q70IA6</id>
        <label>MOB2</label>
    </interactant>
    <organismsDiffer>false</organismsDiffer>
    <experiments>3</experiments>
</comment>
<comment type="interaction">
    <interactant intactId="EBI-988094">
        <id>Q9NT62</id>
    </interactant>
    <interactant intactId="EBI-2946676">
        <id>Q7Z6L1</id>
        <label>TECPR1</label>
    </interactant>
    <organismsDiffer>false</organismsDiffer>
    <experiments>3</experiments>
</comment>
<comment type="subcellular location">
    <subcellularLocation>
        <location evidence="3">Cytoplasm</location>
    </subcellularLocation>
</comment>
<comment type="alternative products">
    <event type="alternative splicing"/>
    <isoform>
        <id>Q9NT62-1</id>
        <name>1</name>
        <sequence type="displayed"/>
    </isoform>
    <isoform>
        <id>Q9NT62-2</id>
        <name>2</name>
        <sequence type="described" ref="VSP_013037"/>
    </isoform>
</comment>
<comment type="tissue specificity">
    <text evidence="3">Widely expressed, with a highest expression in heart, skeletal muscle, kidney, liver and placenta.</text>
</comment>
<comment type="domain">
    <text evidence="14">The N-terminal region works in concert with its geometry-selective amphipathic helix (AH) to promote LC3-PE conjugation activity only on the target membrane.</text>
</comment>
<comment type="domain">
    <text evidence="15">The LC3 interacting regions (LIR) motif mediates interaction with GABARAP and MAP1LC3A in a beta-sheet conformation-dependent manner (PubMed:37252361). The LIR motif is required for LC3 lipidation and ATG3~LC3 thioester formation (PubMed:37252361).</text>
</comment>
<comment type="domain">
    <text evidence="1">The membrane-curvature-sensing motif targets curved membranes.</text>
</comment>
<comment type="PTM">
    <text evidence="9">Cleaved by CASP8 upon death ligand binding such as tumor necrosis factor-alpha (PubMed:22644571). CASP8 cleavage blocks survival-related autophagy and favors apoptosis (PubMed:22644571).</text>
</comment>
<comment type="PTM">
    <text evidence="1">Conjugated to ATG12 at Lys-243. ATG12-conjugation plays a role in regulation of mitochondrial homeostasis and cell death, while it is not involved in phosphatidylethanolamine-conjugation to ATG8-like proteins and autophagy.</text>
</comment>
<comment type="similarity">
    <text evidence="18">Belongs to the ATG3 family.</text>
</comment>
<comment type="sequence caution" evidence="18">
    <conflict type="frameshift">
        <sequence resource="EMBL-CDS" id="AAH02830"/>
    </conflict>
</comment>
<comment type="sequence caution" evidence="18">
    <conflict type="erroneous initiation">
        <sequence resource="EMBL-CDS" id="BAB15237"/>
    </conflict>
    <text>Truncated N-terminus.</text>
</comment>
<comment type="sequence caution" evidence="18">
    <molecule>Isoform 2</molecule>
    <conflict type="frameshift">
        <sequence resource="EMBL-CDS" id="AAH02830"/>
    </conflict>
</comment>
<organism>
    <name type="scientific">Homo sapiens</name>
    <name type="common">Human</name>
    <dbReference type="NCBI Taxonomy" id="9606"/>
    <lineage>
        <taxon>Eukaryota</taxon>
        <taxon>Metazoa</taxon>
        <taxon>Chordata</taxon>
        <taxon>Craniata</taxon>
        <taxon>Vertebrata</taxon>
        <taxon>Euteleostomi</taxon>
        <taxon>Mammalia</taxon>
        <taxon>Eutheria</taxon>
        <taxon>Euarchontoglires</taxon>
        <taxon>Primates</taxon>
        <taxon>Haplorrhini</taxon>
        <taxon>Catarrhini</taxon>
        <taxon>Hominidae</taxon>
        <taxon>Homo</taxon>
    </lineage>
</organism>
<feature type="chain" id="PRO_0000213569" description="Ubiquitin-like-conjugating enzyme ATG3">
    <location>
        <begin position="1"/>
        <end position="314"/>
    </location>
</feature>
<feature type="region of interest" description="Interaction with ATG12" evidence="11">
    <location>
        <begin position="140"/>
        <end position="170"/>
    </location>
</feature>
<feature type="region of interest" description="Disordered" evidence="2">
    <location>
        <begin position="143"/>
        <end position="163"/>
    </location>
</feature>
<feature type="short sequence motif" description="Membrane-curvature-sensing motif" evidence="1">
    <location>
        <begin position="4"/>
        <end position="19"/>
    </location>
</feature>
<feature type="short sequence motif" description="Increases ATG3 translation efficiency by the ribomome assisted of EIF5A" evidence="1">
    <location>
        <begin position="101"/>
        <end position="103"/>
    </location>
</feature>
<feature type="short sequence motif" description="LIR motif" evidence="15 23">
    <location>
        <begin position="104"/>
        <end position="110"/>
    </location>
</feature>
<feature type="short sequence motif" description="Caspase cleavage motif LETD" evidence="9">
    <location>
        <begin position="166"/>
        <end position="169"/>
    </location>
</feature>
<feature type="active site" description="Glycyl thioester intermediate" evidence="19">
    <location>
        <position position="264"/>
    </location>
</feature>
<feature type="site" description="Cleavage; by CASP8" evidence="9">
    <location>
        <begin position="169"/>
        <end position="170"/>
    </location>
</feature>
<feature type="modified residue" description="N-acetylmethionine" evidence="24 25">
    <location>
        <position position="1"/>
    </location>
</feature>
<feature type="cross-link" description="Glycyl lysine isopeptide (Lys-Gly) (interchain with G-Cter in ATG12)" evidence="1">
    <location>
        <position position="243"/>
    </location>
</feature>
<feature type="splice variant" id="VSP_013037" description="In isoform 2." evidence="16 17">
    <original>LLIFLKFVQAVIPTIEYDYTRHFTM</original>
    <variation>PSLYVRLVAKWLLTIFFLRNLV</variation>
    <location>
        <begin position="290"/>
        <end position="314"/>
    </location>
</feature>
<feature type="mutagenesis site" description="Significantly reduces ATG8-family conjugating enzyme activity; when associated with K-15. Decreases protein membrane interactions; when associated with K-15. Does not affect formation of the covalent thioester intermediate with MAP1LC3B; when associated with K-15." evidence="14">
    <original>V</original>
    <variation>D</variation>
    <location>
        <position position="8"/>
    </location>
</feature>
<feature type="mutagenesis site" description="Slightly decreases interaction with lipid monolayers; when associated with D-11. Slightly decreases insertion into lipid monolayers; when associated with D-11. Decreases affinity for monolayers containing cardiolipin (CL); when associated with D-11. Cancels selectivity for anionic phospholipids; when associated with D-11. Impairs binding to lipid bilayers; when associated with D-11. Impairs insertion into lipid bilayers; when associated with D-11. Does not induce vesicle tethering; when associated with D-11." evidence="13">
    <original>K</original>
    <variation>D</variation>
    <location>
        <position position="9"/>
    </location>
</feature>
<feature type="mutagenesis site" description="Slightly decreases interaction with lipid monolayers; when associated with D-9. Slightly decreases insertion into lipid monolayers; when associated with D-9. Decreases affinity for monolayers containing cardiolipin (CL); when associated with D-9. Cancels selectivity for anionic phospholipids; when associated with D-11. Impairs binding to lipid bilayers; when associated with D-11. Impairs insertion into lipid bilayers; when associated with D-11. Does not induce vesicle tethering; when associated with D-11." evidence="13">
    <original>K</original>
    <variation>D</variation>
    <location>
        <position position="11"/>
    </location>
</feature>
<feature type="mutagenesis site" description="Significantly reduces ATG8-family conjugating enzyme activity; when associated with D-8. Decreases protein membrane interactions; when associated with D-8. Does not affect formation of the covalent thioester intermediate with MAP1LC3B; when associated with D-8." evidence="14">
    <original>V</original>
    <variation>K</variation>
    <location>
        <position position="15"/>
    </location>
</feature>
<feature type="mutagenesis site" description="Impairs ATG8-family conjugating enzyme activity. Does not affect protein membrane interactions. Does not affect formation of the covalent thioester intermediate with MAP1LC3B. Partially rescues MAP1LC3B lipidation in cell lacking ATG3." evidence="14">
    <original>P</original>
    <variation>A</variation>
    <location>
        <position position="21"/>
    </location>
</feature>
<feature type="mutagenesis site" description="Severely reduces ATG8-family conjugating enzyme activity. Reduces of about 40% protein membrane interactions. Does not affect formation of the covalent thioester intermediate with MAP1LC3B. Completely fails to induce membrane-bound MAP1LC3B (MAP1LC3B-II) and autophagic flux when expressed in cell lacking ATG3." evidence="14">
    <original>L</original>
    <variation>T</variation>
    <location>
        <position position="23"/>
    </location>
</feature>
<feature type="mutagenesis site" description="Increases of about 30% more ATG8-family conjugating enzyme activity. Does not affect protein membrane interactions. Does not affect formation of the covalent thioester intermediate with MAP1LC3B." evidence="14">
    <original>E</original>
    <variation>K</variation>
    <location>
        <position position="25"/>
    </location>
</feature>
<feature type="mutagenesis site" description="Severely diminish GABARAP:ATG3 conjugation." evidence="15">
    <original>E</original>
    <variation>A</variation>
    <location>
        <position position="95"/>
    </location>
</feature>
<feature type="mutagenesis site" description="Severely diminish GABARAP:ATG3 conjugation." evidence="15">
    <original>I</original>
    <variation>A</variation>
    <location>
        <position position="97"/>
    </location>
</feature>
<feature type="mutagenesis site" description="Almost completely abrogates GABARAP:ATG3 conjugation." evidence="15">
    <original>W</original>
    <variation>A</variation>
    <location>
        <position position="107"/>
    </location>
</feature>
<feature type="mutagenesis site" description="Significantly reduces GABARAP:ATG3 conjugation." evidence="15">
    <original>V</original>
    <variation>A</variation>
    <location>
        <position position="108"/>
    </location>
</feature>
<feature type="mutagenesis site" description="Strongly decreases affinity for the complex ATG12:ATG5:ATG16L1. Severely decreases phosphatidylethanolamine (PE)-conjugated ATG8-like proteins formation." evidence="11">
    <original>EEEEDEDE</original>
    <variation>AAAAAAAA</variation>
    <location>
        <begin position="144"/>
        <end position="151"/>
    </location>
</feature>
<feature type="mutagenesis site" description="Strongly decreases affinity for the complex ATG12:ATG5:ATG16L1. Impairs interaction with the complex ATG12:ATG5:ATG16L1; when associated with A-157. Impairs phosphatidylethanolamine (PE)-conjugated ATG8-like protein formation. Loss of phosphatidylethanolamine (PE)-conjugated ATG8-like proteins formation; when associated with A-157. Impairs interaction with ATG12:ATG5; when associated with A-157. Does not affect interaction with ATG7; when associated with A-157. Does not affect the formation of the ATG8-like protein:ATG3 intermediate complex; when associated with A-157. Affects modestly the ATG3-ATG7 interaction; when associated with A-157. Reduces the thioester-linkage formation with GABARAP; when associated with A-157." evidence="11 12">
    <original>D</original>
    <variation>A</variation>
    <location>
        <position position="156"/>
    </location>
</feature>
<feature type="mutagenesis site" description="Strongly decreases affinity for the complex ATG12:ATG5:ATG16L1. Impairs interaction with the complex ATG12:ATG5:ATG16L1; when associated with A-156. Impairs phosphatidylethanolamine (PE)-conjugated ATG8-like proteins formation. Loss of phosphatidylethanolamine (PE)-conjugated ATG8-like proteins formation; when associated with A-156. Impairs interaction with ATG12:ATG5; when associated with A-156. Does not affect interaction with ATG7; when associated with A-156. Does not affect the formation of the ATG8-like protein:ATG3 intermediate complex; when associated with A-156. Affects modestly the ATG3-ATG7 interaction; when associated with A-156. Reduces the thioester-linkage formation with GABARAP; when associated with A-156." evidence="11 12">
    <original>M</original>
    <variation>A</variation>
    <location>
        <position position="157"/>
    </location>
</feature>
<feature type="mutagenesis site" description="Strongly decreases affinity for the complex ATG12:ATG5:ATG16L1. Affects modestly the ATG3-ATG7 interaction. Reduces the thioester-linkage formation with GABARAP." evidence="11 12">
    <original>Y</original>
    <variation>A</variation>
    <location>
        <position position="160"/>
    </location>
</feature>
<feature type="mutagenesis site" description="Strongly decreases affinity for the complex ATG12:ATG5:ATG16L1." evidence="11">
    <original>E</original>
    <variation>A</variation>
    <location>
        <position position="161"/>
    </location>
</feature>
<feature type="mutagenesis site" description="Weakens the ATG3-ATG7 interaction. Reduces the thioester-linkage formation with GABARAP." evidence="12">
    <original>E</original>
    <variation>A</variation>
    <location>
        <position position="167"/>
    </location>
</feature>
<feature type="mutagenesis site" description="Weakens the ATG3-ATG7 interaction. Severely reduces the thioester-linkage formation with GABARAP." evidence="12">
    <original>D</original>
    <variation>A</variation>
    <location>
        <position position="169"/>
    </location>
</feature>
<feature type="mutagenesis site" description="Weakens the ATG3-ATG7 interaction. Reduces the thioester-linkage formation with GABARAP." evidence="12">
    <original>A</original>
    <variation>A</variation>
    <location>
        <position position="171"/>
    </location>
</feature>
<feature type="mutagenesis site" description="Weakens the ATG3-ATG7 interaction. Significantly reduces the thioester-linkage formation with GABARAP." evidence="12">
    <original>T</original>
    <variation>A</variation>
    <location>
        <position position="172"/>
    </location>
</feature>
<feature type="mutagenesis site" description="Weakens the ATG3-ATG7 interaction. Significantly reduces the thioester-linkage formation with GABARAP." evidence="12">
    <original>L</original>
    <variation>A</variation>
    <location>
        <position position="173"/>
    </location>
</feature>
<feature type="mutagenesis site" description="Does not affect interaction with ATG12:ATG5. Impairs MAP1LC3A lipidation. Impairs MAP1LC3B lipidation. Impairs ATG3:ATG8-like proteins thioester complex formation." evidence="11 15">
    <original>C</original>
    <variation>A</variation>
    <location>
        <position position="264"/>
    </location>
</feature>
<feature type="mutagenesis site" description="Instead of the formation of an intermediate complex with a thiol ester bond between ATG3 (E2-like enzyme) and GABARAPL1/APG8L (substrate), a stable complex with an O-ester bond is formed." evidence="3">
    <original>C</original>
    <variation>S</variation>
    <location>
        <position position="264"/>
    </location>
</feature>
<feature type="turn" evidence="28">
    <location>
        <begin position="28"/>
        <end position="31"/>
    </location>
</feature>
<feature type="helix" evidence="28">
    <location>
        <begin position="36"/>
        <end position="49"/>
    </location>
</feature>
<feature type="strand" evidence="28">
    <location>
        <begin position="54"/>
        <end position="56"/>
    </location>
</feature>
<feature type="helix" evidence="28">
    <location>
        <begin position="69"/>
        <end position="71"/>
    </location>
</feature>
<feature type="strand" evidence="28">
    <location>
        <begin position="72"/>
        <end position="79"/>
    </location>
</feature>
<feature type="strand" evidence="27">
    <location>
        <begin position="97"/>
        <end position="99"/>
    </location>
</feature>
<feature type="strand" evidence="27">
    <location>
        <begin position="101"/>
        <end position="105"/>
    </location>
</feature>
<feature type="strand" evidence="27">
    <location>
        <begin position="107"/>
        <end position="109"/>
    </location>
</feature>
<feature type="helix" evidence="26">
    <location>
        <begin position="157"/>
        <end position="163"/>
    </location>
</feature>
<feature type="strand" evidence="28">
    <location>
        <begin position="199"/>
        <end position="207"/>
    </location>
</feature>
<feature type="turn" evidence="28">
    <location>
        <begin position="208"/>
        <end position="211"/>
    </location>
</feature>
<feature type="strand" evidence="28">
    <location>
        <begin position="212"/>
        <end position="220"/>
    </location>
</feature>
<feature type="helix" evidence="28">
    <location>
        <begin position="229"/>
        <end position="232"/>
    </location>
</feature>
<feature type="helix" evidence="28">
    <location>
        <begin position="233"/>
        <end position="235"/>
    </location>
</feature>
<feature type="helix" evidence="28">
    <location>
        <begin position="238"/>
        <end position="241"/>
    </location>
</feature>
<feature type="turn" evidence="28">
    <location>
        <begin position="242"/>
        <end position="244"/>
    </location>
</feature>
<feature type="strand" evidence="28">
    <location>
        <begin position="245"/>
        <end position="248"/>
    </location>
</feature>
<feature type="strand" evidence="28">
    <location>
        <begin position="251"/>
        <end position="253"/>
    </location>
</feature>
<feature type="strand" evidence="28">
    <location>
        <begin position="258"/>
        <end position="261"/>
    </location>
</feature>
<feature type="helix" evidence="28">
    <location>
        <begin position="267"/>
        <end position="278"/>
    </location>
</feature>
<feature type="helix" evidence="28">
    <location>
        <begin position="286"/>
        <end position="288"/>
    </location>
</feature>
<feature type="helix" evidence="28">
    <location>
        <begin position="289"/>
        <end position="298"/>
    </location>
</feature>
<evidence type="ECO:0000250" key="1">
    <source>
        <dbReference type="UniProtKB" id="Q9CPX6"/>
    </source>
</evidence>
<evidence type="ECO:0000256" key="2">
    <source>
        <dbReference type="SAM" id="MobiDB-lite"/>
    </source>
</evidence>
<evidence type="ECO:0000269" key="3">
    <source>
    </source>
</evidence>
<evidence type="ECO:0000269" key="4">
    <source>
    </source>
</evidence>
<evidence type="ECO:0000269" key="5">
    <source>
    </source>
</evidence>
<evidence type="ECO:0000269" key="6">
    <source>
    </source>
</evidence>
<evidence type="ECO:0000269" key="7">
    <source>
    </source>
</evidence>
<evidence type="ECO:0000269" key="8">
    <source>
    </source>
</evidence>
<evidence type="ECO:0000269" key="9">
    <source>
    </source>
</evidence>
<evidence type="ECO:0000269" key="10">
    <source>
    </source>
</evidence>
<evidence type="ECO:0000269" key="11">
    <source>
    </source>
</evidence>
<evidence type="ECO:0000269" key="12">
    <source>
    </source>
</evidence>
<evidence type="ECO:0000269" key="13">
    <source>
    </source>
</evidence>
<evidence type="ECO:0000269" key="14">
    <source>
    </source>
</evidence>
<evidence type="ECO:0000269" key="15">
    <source>
    </source>
</evidence>
<evidence type="ECO:0000303" key="16">
    <source>
    </source>
</evidence>
<evidence type="ECO:0000303" key="17">
    <source>
    </source>
</evidence>
<evidence type="ECO:0000305" key="18"/>
<evidence type="ECO:0000305" key="19">
    <source>
    </source>
</evidence>
<evidence type="ECO:0000305" key="20">
    <source ref="2"/>
</evidence>
<evidence type="ECO:0000312" key="21">
    <source>
        <dbReference type="HGNC" id="HGNC:20962"/>
    </source>
</evidence>
<evidence type="ECO:0007744" key="22">
    <source>
        <dbReference type="PDB" id="4NAW"/>
    </source>
</evidence>
<evidence type="ECO:0007744" key="23">
    <source>
        <dbReference type="PDB" id="8AFI"/>
    </source>
</evidence>
<evidence type="ECO:0007744" key="24">
    <source>
    </source>
</evidence>
<evidence type="ECO:0007744" key="25">
    <source>
    </source>
</evidence>
<evidence type="ECO:0007829" key="26">
    <source>
        <dbReference type="PDB" id="4NAW"/>
    </source>
</evidence>
<evidence type="ECO:0007829" key="27">
    <source>
        <dbReference type="PDB" id="8AFI"/>
    </source>
</evidence>
<evidence type="ECO:0007829" key="28">
    <source>
        <dbReference type="PDB" id="8FKM"/>
    </source>
</evidence>
<protein>
    <recommendedName>
        <fullName evidence="18">Ubiquitin-like-conjugating enzyme ATG3</fullName>
        <ecNumber evidence="11 14 15">2.3.2.-</ecNumber>
    </recommendedName>
    <alternativeName>
        <fullName>Autophagy-related protein 3</fullName>
        <shortName>APG3-like</shortName>
        <shortName>hApg3</shortName>
    </alternativeName>
    <alternativeName>
        <fullName evidence="20">Protein PC3-96</fullName>
    </alternativeName>
</protein>
<sequence>MQNVINTVKGKALEVAEYLTPVLKESKFKETGVITPEEFVAAGDHLVHHCPTWQWATGEELKVKAYLPTGKQFLVTKNVPCYKRCKQMEYSDELEAIIEEDDGDGGWVDTYHNTGITGITEAVKEITLENKDNIRLQDCSALCEEEEDEDEGEAADMEEYEESGLLETDEATLDTRKIVEACKAKTDAGGEDAILQTRTYDLYITYDKYYQTPRLWLFGYDEQRQPLTVEHMYEDISQDHVKKTVTIENHPHLPPPPMCSVHPCRHAEVMKKIIETVAEGGGELGVHMYLLIFLKFVQAVIPTIEYDYTRHFTM</sequence>
<dbReference type="EC" id="2.3.2.-" evidence="11 14 15"/>
<dbReference type="EMBL" id="AB079384">
    <property type="protein sequence ID" value="BAB90843.1"/>
    <property type="molecule type" value="mRNA"/>
</dbReference>
<dbReference type="EMBL" id="AF202092">
    <property type="protein sequence ID" value="AAG35611.1"/>
    <property type="molecule type" value="mRNA"/>
</dbReference>
<dbReference type="EMBL" id="AL137515">
    <property type="protein sequence ID" value="CAB70781.1"/>
    <property type="molecule type" value="mRNA"/>
</dbReference>
<dbReference type="EMBL" id="AC092692">
    <property type="status" value="NOT_ANNOTATED_CDS"/>
    <property type="molecule type" value="Genomic_DNA"/>
</dbReference>
<dbReference type="EMBL" id="BC002830">
    <property type="protein sequence ID" value="AAH02830.1"/>
    <property type="status" value="ALT_FRAME"/>
    <property type="molecule type" value="mRNA"/>
</dbReference>
<dbReference type="EMBL" id="BC024221">
    <property type="protein sequence ID" value="AAH24221.1"/>
    <property type="molecule type" value="mRNA"/>
</dbReference>
<dbReference type="EMBL" id="AK025778">
    <property type="protein sequence ID" value="BAB15237.1"/>
    <property type="status" value="ALT_INIT"/>
    <property type="molecule type" value="mRNA"/>
</dbReference>
<dbReference type="CCDS" id="CCDS2966.1">
    <molecule id="Q9NT62-1"/>
</dbReference>
<dbReference type="CCDS" id="CCDS63721.1">
    <molecule id="Q9NT62-2"/>
</dbReference>
<dbReference type="PIR" id="T46276">
    <property type="entry name" value="T46276"/>
</dbReference>
<dbReference type="RefSeq" id="NP_001265641.1">
    <molecule id="Q9NT62-2"/>
    <property type="nucleotide sequence ID" value="NM_001278712.2"/>
</dbReference>
<dbReference type="RefSeq" id="NP_071933.2">
    <molecule id="Q9NT62-1"/>
    <property type="nucleotide sequence ID" value="NM_022488.4"/>
</dbReference>
<dbReference type="PDB" id="4NAW">
    <property type="method" value="X-ray"/>
    <property type="resolution" value="2.20 A"/>
    <property type="chains" value="D/H/L/P=140-170"/>
</dbReference>
<dbReference type="PDB" id="8AFI">
    <property type="method" value="X-ray"/>
    <property type="resolution" value="2.66 A"/>
    <property type="chains" value="B/D/F/H/J/L/N/P=90-113"/>
</dbReference>
<dbReference type="PDB" id="8FKM">
    <property type="method" value="NMR"/>
    <property type="chains" value="A=25-314"/>
</dbReference>
<dbReference type="PDBsum" id="4NAW"/>
<dbReference type="PDBsum" id="8AFI"/>
<dbReference type="PDBsum" id="8FKM"/>
<dbReference type="SMR" id="Q9NT62"/>
<dbReference type="BioGRID" id="122171">
    <property type="interactions" value="283"/>
</dbReference>
<dbReference type="DIP" id="DIP-35052N"/>
<dbReference type="FunCoup" id="Q9NT62">
    <property type="interactions" value="3640"/>
</dbReference>
<dbReference type="IntAct" id="Q9NT62">
    <property type="interactions" value="60"/>
</dbReference>
<dbReference type="STRING" id="9606.ENSP00000283290"/>
<dbReference type="TCDB" id="9.A.15.2.1">
    <property type="family name" value="the autophagy-related phagophore-formation transporter (apt) family"/>
</dbReference>
<dbReference type="GlyGen" id="Q9NT62">
    <property type="glycosylation" value="1 site, 1 O-linked glycan (1 site)"/>
</dbReference>
<dbReference type="iPTMnet" id="Q9NT62"/>
<dbReference type="PhosphoSitePlus" id="Q9NT62"/>
<dbReference type="SwissPalm" id="Q9NT62"/>
<dbReference type="BioMuta" id="ATG3"/>
<dbReference type="DMDM" id="61212142"/>
<dbReference type="jPOST" id="Q9NT62"/>
<dbReference type="MassIVE" id="Q9NT62"/>
<dbReference type="PaxDb" id="9606-ENSP00000283290"/>
<dbReference type="PeptideAtlas" id="Q9NT62"/>
<dbReference type="ProteomicsDB" id="11034"/>
<dbReference type="ProteomicsDB" id="82601">
    <molecule id="Q9NT62-1"/>
</dbReference>
<dbReference type="ProteomicsDB" id="82602">
    <molecule id="Q9NT62-2"/>
</dbReference>
<dbReference type="Pumba" id="Q9NT62"/>
<dbReference type="Antibodypedia" id="32502">
    <property type="antibodies" value="736 antibodies from 39 providers"/>
</dbReference>
<dbReference type="DNASU" id="64422"/>
<dbReference type="Ensembl" id="ENST00000283290.10">
    <molecule id="Q9NT62-1"/>
    <property type="protein sequence ID" value="ENSP00000283290.5"/>
    <property type="gene ID" value="ENSG00000144848.11"/>
</dbReference>
<dbReference type="Ensembl" id="ENST00000402314.6">
    <molecule id="Q9NT62-2"/>
    <property type="protein sequence ID" value="ENSP00000385943.2"/>
    <property type="gene ID" value="ENSG00000144848.11"/>
</dbReference>
<dbReference type="GeneID" id="64422"/>
<dbReference type="KEGG" id="hsa:64422"/>
<dbReference type="MANE-Select" id="ENST00000283290.10">
    <property type="protein sequence ID" value="ENSP00000283290.5"/>
    <property type="RefSeq nucleotide sequence ID" value="NM_022488.5"/>
    <property type="RefSeq protein sequence ID" value="NP_071933.2"/>
</dbReference>
<dbReference type="UCSC" id="uc003dzc.5">
    <molecule id="Q9NT62-1"/>
    <property type="organism name" value="human"/>
</dbReference>
<dbReference type="UCSC" id="uc062mkm.1">
    <property type="organism name" value="human"/>
</dbReference>
<dbReference type="AGR" id="HGNC:20962"/>
<dbReference type="CTD" id="64422"/>
<dbReference type="DisGeNET" id="64422"/>
<dbReference type="GeneCards" id="ATG3"/>
<dbReference type="HGNC" id="HGNC:20962">
    <property type="gene designation" value="ATG3"/>
</dbReference>
<dbReference type="HPA" id="ENSG00000144848">
    <property type="expression patterns" value="Low tissue specificity"/>
</dbReference>
<dbReference type="MIM" id="609606">
    <property type="type" value="gene"/>
</dbReference>
<dbReference type="neXtProt" id="NX_Q9NT62"/>
<dbReference type="OpenTargets" id="ENSG00000144848"/>
<dbReference type="PharmGKB" id="PA134883444"/>
<dbReference type="VEuPathDB" id="HostDB:ENSG00000144848"/>
<dbReference type="eggNOG" id="KOG2981">
    <property type="taxonomic scope" value="Eukaryota"/>
</dbReference>
<dbReference type="GeneTree" id="ENSGT00390000010308"/>
<dbReference type="HOGENOM" id="CLU_027518_0_0_1"/>
<dbReference type="InParanoid" id="Q9NT62"/>
<dbReference type="OMA" id="HCPTWSW"/>
<dbReference type="OrthoDB" id="1584384at2759"/>
<dbReference type="PAN-GO" id="Q9NT62">
    <property type="GO annotations" value="6 GO annotations based on evolutionary models"/>
</dbReference>
<dbReference type="PhylomeDB" id="Q9NT62"/>
<dbReference type="TreeFam" id="TF105903"/>
<dbReference type="PathwayCommons" id="Q9NT62"/>
<dbReference type="Reactome" id="R-HSA-1632852">
    <property type="pathway name" value="Macroautophagy"/>
</dbReference>
<dbReference type="SignaLink" id="Q9NT62"/>
<dbReference type="SIGNOR" id="Q9NT62"/>
<dbReference type="BioGRID-ORCS" id="64422">
    <property type="hits" value="37 hits in 1165 CRISPR screens"/>
</dbReference>
<dbReference type="CD-CODE" id="DEE660B4">
    <property type="entry name" value="Stress granule"/>
</dbReference>
<dbReference type="ChiTaRS" id="ATG3">
    <property type="organism name" value="human"/>
</dbReference>
<dbReference type="EvolutionaryTrace" id="Q9NT62"/>
<dbReference type="GenomeRNAi" id="64422"/>
<dbReference type="Pharos" id="Q9NT62">
    <property type="development level" value="Tbio"/>
</dbReference>
<dbReference type="PRO" id="PR:Q9NT62"/>
<dbReference type="Proteomes" id="UP000005640">
    <property type="component" value="Chromosome 3"/>
</dbReference>
<dbReference type="RNAct" id="Q9NT62">
    <property type="molecule type" value="protein"/>
</dbReference>
<dbReference type="Bgee" id="ENSG00000144848">
    <property type="expression patterns" value="Expressed in monocyte and 212 other cell types or tissues"/>
</dbReference>
<dbReference type="ExpressionAtlas" id="Q9NT62">
    <property type="expression patterns" value="baseline and differential"/>
</dbReference>
<dbReference type="GO" id="GO:0034274">
    <property type="term" value="C:Atg12-Atg5-Atg16 complex"/>
    <property type="evidence" value="ECO:0000314"/>
    <property type="project" value="UniProtKB"/>
</dbReference>
<dbReference type="GO" id="GO:0005737">
    <property type="term" value="C:cytoplasm"/>
    <property type="evidence" value="ECO:0000314"/>
    <property type="project" value="UniProt"/>
</dbReference>
<dbReference type="GO" id="GO:0005829">
    <property type="term" value="C:cytosol"/>
    <property type="evidence" value="ECO:0000314"/>
    <property type="project" value="UniProtKB"/>
</dbReference>
<dbReference type="GO" id="GO:0000407">
    <property type="term" value="C:phagophore assembly site"/>
    <property type="evidence" value="ECO:0000318"/>
    <property type="project" value="GO_Central"/>
</dbReference>
<dbReference type="GO" id="GO:0019777">
    <property type="term" value="F:Atg12 transferase activity"/>
    <property type="evidence" value="ECO:0000250"/>
    <property type="project" value="UniProtKB"/>
</dbReference>
<dbReference type="GO" id="GO:0141046">
    <property type="term" value="F:Atg8-family conjugating enzyme activity"/>
    <property type="evidence" value="ECO:0000314"/>
    <property type="project" value="UniProtKB"/>
</dbReference>
<dbReference type="GO" id="GO:0019776">
    <property type="term" value="F:Atg8-family ligase activity"/>
    <property type="evidence" value="ECO:0000250"/>
    <property type="project" value="UniProtKB"/>
</dbReference>
<dbReference type="GO" id="GO:0019899">
    <property type="term" value="F:enzyme binding"/>
    <property type="evidence" value="ECO:0000353"/>
    <property type="project" value="UniProtKB"/>
</dbReference>
<dbReference type="GO" id="GO:0019787">
    <property type="term" value="F:ubiquitin-like protein transferase activity"/>
    <property type="evidence" value="ECO:0000314"/>
    <property type="project" value="MGI"/>
</dbReference>
<dbReference type="GO" id="GO:0000045">
    <property type="term" value="P:autophagosome assembly"/>
    <property type="evidence" value="ECO:0000315"/>
    <property type="project" value="UniProt"/>
</dbReference>
<dbReference type="GO" id="GO:0000422">
    <property type="term" value="P:autophagy of mitochondrion"/>
    <property type="evidence" value="ECO:0000318"/>
    <property type="project" value="GO_Central"/>
</dbReference>
<dbReference type="GO" id="GO:0061723">
    <property type="term" value="P:glycophagy"/>
    <property type="evidence" value="ECO:0000318"/>
    <property type="project" value="GO_Central"/>
</dbReference>
<dbReference type="GO" id="GO:0043653">
    <property type="term" value="P:mitochondrial fragmentation involved in apoptotic process"/>
    <property type="evidence" value="ECO:0000250"/>
    <property type="project" value="UniProtKB"/>
</dbReference>
<dbReference type="GO" id="GO:0050765">
    <property type="term" value="P:negative regulation of phagocytosis"/>
    <property type="evidence" value="ECO:0007669"/>
    <property type="project" value="Ensembl"/>
</dbReference>
<dbReference type="GO" id="GO:0044804">
    <property type="term" value="P:nucleophagy"/>
    <property type="evidence" value="ECO:0000318"/>
    <property type="project" value="GO_Central"/>
</dbReference>
<dbReference type="GO" id="GO:0006612">
    <property type="term" value="P:protein targeting to membrane"/>
    <property type="evidence" value="ECO:0000250"/>
    <property type="project" value="UniProtKB"/>
</dbReference>
<dbReference type="GO" id="GO:0015031">
    <property type="term" value="P:protein transport"/>
    <property type="evidence" value="ECO:0007669"/>
    <property type="project" value="UniProtKB-KW"/>
</dbReference>
<dbReference type="GO" id="GO:0016567">
    <property type="term" value="P:protein ubiquitination"/>
    <property type="evidence" value="ECO:0000314"/>
    <property type="project" value="UniProtKB"/>
</dbReference>
<dbReference type="GO" id="GO:1902017">
    <property type="term" value="P:regulation of cilium assembly"/>
    <property type="evidence" value="ECO:0000250"/>
    <property type="project" value="UniProtKB"/>
</dbReference>
<dbReference type="DisProt" id="DP01720"/>
<dbReference type="FunFam" id="3.30.1460.50:FF:000001">
    <property type="entry name" value="Autophagy-related protein 3"/>
    <property type="match status" value="1"/>
</dbReference>
<dbReference type="Gene3D" id="3.30.1460.50">
    <property type="match status" value="1"/>
</dbReference>
<dbReference type="InterPro" id="IPR007135">
    <property type="entry name" value="Atg3/Atg10"/>
</dbReference>
<dbReference type="PANTHER" id="PTHR12866">
    <property type="entry name" value="UBIQUITIN-LIKE-CONJUGATING ENZYME ATG3"/>
    <property type="match status" value="1"/>
</dbReference>
<dbReference type="PANTHER" id="PTHR12866:SF2">
    <property type="entry name" value="UBIQUITIN-LIKE-CONJUGATING ENZYME ATG3"/>
    <property type="match status" value="1"/>
</dbReference>
<dbReference type="Pfam" id="PF03987">
    <property type="entry name" value="Autophagy_act_C"/>
    <property type="match status" value="1"/>
</dbReference>
<gene>
    <name evidence="21" type="primary">ATG3</name>
    <name type="synonym">APG3</name>
    <name type="synonym">APG3L</name>
</gene>
<reference key="1">
    <citation type="journal article" date="2002" name="J. Biol. Chem.">
        <title>Human Apg3p/Aut1p homologue is an authentic E2 enzyme for multiple substrates, GATE-16, GABARAP, and MAP-LC3, and facilitates the conjugation of hApg12p to hApg5p.</title>
        <authorList>
            <person name="Tanida I."/>
            <person name="Tanida-Miyake E."/>
            <person name="Komatsu M."/>
            <person name="Ueno T."/>
            <person name="Kominami E."/>
        </authorList>
    </citation>
    <scope>NUCLEOTIDE SEQUENCE [MRNA] (ISOFORM 1)</scope>
    <scope>TISSUE SPECIFICITY</scope>
    <scope>MUTAGENESIS OF CYS-264</scope>
    <scope>SUBCELLULAR LOCATION</scope>
    <scope>FUNCTION</scope>
    <scope>ACTIVE SITE</scope>
    <scope>INTERACTION WITH ATG7 AND ATG12</scope>
    <source>
        <tissue>Brain</tissue>
    </source>
</reference>
<reference key="2">
    <citation type="submission" date="1999-11" db="EMBL/GenBank/DDBJ databases">
        <title>Cloning and characterization of human PC3-96 gene.</title>
        <authorList>
            <person name="Wu B.X."/>
            <person name="Li Y."/>
            <person name="Laser M."/>
            <person name="Crosson C.E."/>
            <person name="Hazard E.S. III"/>
            <person name="Ma J.X."/>
        </authorList>
    </citation>
    <scope>NUCLEOTIDE SEQUENCE [MRNA] (ISOFORM 1)</scope>
    <source>
        <tissue>Retina</tissue>
    </source>
</reference>
<reference key="3">
    <citation type="journal article" date="2007" name="BMC Genomics">
        <title>The full-ORF clone resource of the German cDNA consortium.</title>
        <authorList>
            <person name="Bechtel S."/>
            <person name="Rosenfelder H."/>
            <person name="Duda A."/>
            <person name="Schmidt C.P."/>
            <person name="Ernst U."/>
            <person name="Wellenreuther R."/>
            <person name="Mehrle A."/>
            <person name="Schuster C."/>
            <person name="Bahr A."/>
            <person name="Bloecker H."/>
            <person name="Heubner D."/>
            <person name="Hoerlein A."/>
            <person name="Michel G."/>
            <person name="Wedler H."/>
            <person name="Koehrer K."/>
            <person name="Ottenwaelder B."/>
            <person name="Poustka A."/>
            <person name="Wiemann S."/>
            <person name="Schupp I."/>
        </authorList>
    </citation>
    <scope>NUCLEOTIDE SEQUENCE [LARGE SCALE MRNA] (ISOFORM 1)</scope>
    <source>
        <tissue>Brain</tissue>
    </source>
</reference>
<reference key="4">
    <citation type="journal article" date="2006" name="Nature">
        <title>The DNA sequence, annotation and analysis of human chromosome 3.</title>
        <authorList>
            <person name="Muzny D.M."/>
            <person name="Scherer S.E."/>
            <person name="Kaul R."/>
            <person name="Wang J."/>
            <person name="Yu J."/>
            <person name="Sudbrak R."/>
            <person name="Buhay C.J."/>
            <person name="Chen R."/>
            <person name="Cree A."/>
            <person name="Ding Y."/>
            <person name="Dugan-Rocha S."/>
            <person name="Gill R."/>
            <person name="Gunaratne P."/>
            <person name="Harris R.A."/>
            <person name="Hawes A.C."/>
            <person name="Hernandez J."/>
            <person name="Hodgson A.V."/>
            <person name="Hume J."/>
            <person name="Jackson A."/>
            <person name="Khan Z.M."/>
            <person name="Kovar-Smith C."/>
            <person name="Lewis L.R."/>
            <person name="Lozado R.J."/>
            <person name="Metzker M.L."/>
            <person name="Milosavljevic A."/>
            <person name="Miner G.R."/>
            <person name="Morgan M.B."/>
            <person name="Nazareth L.V."/>
            <person name="Scott G."/>
            <person name="Sodergren E."/>
            <person name="Song X.-Z."/>
            <person name="Steffen D."/>
            <person name="Wei S."/>
            <person name="Wheeler D.A."/>
            <person name="Wright M.W."/>
            <person name="Worley K.C."/>
            <person name="Yuan Y."/>
            <person name="Zhang Z."/>
            <person name="Adams C.Q."/>
            <person name="Ansari-Lari M.A."/>
            <person name="Ayele M."/>
            <person name="Brown M.J."/>
            <person name="Chen G."/>
            <person name="Chen Z."/>
            <person name="Clendenning J."/>
            <person name="Clerc-Blankenburg K.P."/>
            <person name="Chen R."/>
            <person name="Chen Z."/>
            <person name="Davis C."/>
            <person name="Delgado O."/>
            <person name="Dinh H.H."/>
            <person name="Dong W."/>
            <person name="Draper H."/>
            <person name="Ernst S."/>
            <person name="Fu G."/>
            <person name="Gonzalez-Garay M.L."/>
            <person name="Garcia D.K."/>
            <person name="Gillett W."/>
            <person name="Gu J."/>
            <person name="Hao B."/>
            <person name="Haugen E."/>
            <person name="Havlak P."/>
            <person name="He X."/>
            <person name="Hennig S."/>
            <person name="Hu S."/>
            <person name="Huang W."/>
            <person name="Jackson L.R."/>
            <person name="Jacob L.S."/>
            <person name="Kelly S.H."/>
            <person name="Kube M."/>
            <person name="Levy R."/>
            <person name="Li Z."/>
            <person name="Liu B."/>
            <person name="Liu J."/>
            <person name="Liu W."/>
            <person name="Lu J."/>
            <person name="Maheshwari M."/>
            <person name="Nguyen B.-V."/>
            <person name="Okwuonu G.O."/>
            <person name="Palmeiri A."/>
            <person name="Pasternak S."/>
            <person name="Perez L.M."/>
            <person name="Phelps K.A."/>
            <person name="Plopper F.J."/>
            <person name="Qiang B."/>
            <person name="Raymond C."/>
            <person name="Rodriguez R."/>
            <person name="Saenphimmachak C."/>
            <person name="Santibanez J."/>
            <person name="Shen H."/>
            <person name="Shen Y."/>
            <person name="Subramanian S."/>
            <person name="Tabor P.E."/>
            <person name="Verduzco D."/>
            <person name="Waldron L."/>
            <person name="Wang J."/>
            <person name="Wang J."/>
            <person name="Wang Q."/>
            <person name="Williams G.A."/>
            <person name="Wong G.K.-S."/>
            <person name="Yao Z."/>
            <person name="Zhang J."/>
            <person name="Zhang X."/>
            <person name="Zhao G."/>
            <person name="Zhou J."/>
            <person name="Zhou Y."/>
            <person name="Nelson D."/>
            <person name="Lehrach H."/>
            <person name="Reinhardt R."/>
            <person name="Naylor S.L."/>
            <person name="Yang H."/>
            <person name="Olson M."/>
            <person name="Weinstock G."/>
            <person name="Gibbs R.A."/>
        </authorList>
    </citation>
    <scope>NUCLEOTIDE SEQUENCE [LARGE SCALE GENOMIC DNA]</scope>
</reference>
<reference key="5">
    <citation type="journal article" date="2004" name="Genome Res.">
        <title>The status, quality, and expansion of the NIH full-length cDNA project: the Mammalian Gene Collection (MGC).</title>
        <authorList>
            <consortium name="The MGC Project Team"/>
        </authorList>
    </citation>
    <scope>NUCLEOTIDE SEQUENCE [LARGE SCALE MRNA] (ISOFORMS 1 AND 2)</scope>
    <source>
        <tissue>Lung</tissue>
        <tissue>Lymph</tissue>
    </source>
</reference>
<reference key="6">
    <citation type="journal article" date="2004" name="Nat. Genet.">
        <title>Complete sequencing and characterization of 21,243 full-length human cDNAs.</title>
        <authorList>
            <person name="Ota T."/>
            <person name="Suzuki Y."/>
            <person name="Nishikawa T."/>
            <person name="Otsuki T."/>
            <person name="Sugiyama T."/>
            <person name="Irie R."/>
            <person name="Wakamatsu A."/>
            <person name="Hayashi K."/>
            <person name="Sato H."/>
            <person name="Nagai K."/>
            <person name="Kimura K."/>
            <person name="Makita H."/>
            <person name="Sekine M."/>
            <person name="Obayashi M."/>
            <person name="Nishi T."/>
            <person name="Shibahara T."/>
            <person name="Tanaka T."/>
            <person name="Ishii S."/>
            <person name="Yamamoto J."/>
            <person name="Saito K."/>
            <person name="Kawai Y."/>
            <person name="Isono Y."/>
            <person name="Nakamura Y."/>
            <person name="Nagahari K."/>
            <person name="Murakami K."/>
            <person name="Yasuda T."/>
            <person name="Iwayanagi T."/>
            <person name="Wagatsuma M."/>
            <person name="Shiratori A."/>
            <person name="Sudo H."/>
            <person name="Hosoiri T."/>
            <person name="Kaku Y."/>
            <person name="Kodaira H."/>
            <person name="Kondo H."/>
            <person name="Sugawara M."/>
            <person name="Takahashi M."/>
            <person name="Kanda K."/>
            <person name="Yokoi T."/>
            <person name="Furuya T."/>
            <person name="Kikkawa E."/>
            <person name="Omura Y."/>
            <person name="Abe K."/>
            <person name="Kamihara K."/>
            <person name="Katsuta N."/>
            <person name="Sato K."/>
            <person name="Tanikawa M."/>
            <person name="Yamazaki M."/>
            <person name="Ninomiya K."/>
            <person name="Ishibashi T."/>
            <person name="Yamashita H."/>
            <person name="Murakawa K."/>
            <person name="Fujimori K."/>
            <person name="Tanai H."/>
            <person name="Kimata M."/>
            <person name="Watanabe M."/>
            <person name="Hiraoka S."/>
            <person name="Chiba Y."/>
            <person name="Ishida S."/>
            <person name="Ono Y."/>
            <person name="Takiguchi S."/>
            <person name="Watanabe S."/>
            <person name="Yosida M."/>
            <person name="Hotuta T."/>
            <person name="Kusano J."/>
            <person name="Kanehori K."/>
            <person name="Takahashi-Fujii A."/>
            <person name="Hara H."/>
            <person name="Tanase T.-O."/>
            <person name="Nomura Y."/>
            <person name="Togiya S."/>
            <person name="Komai F."/>
            <person name="Hara R."/>
            <person name="Takeuchi K."/>
            <person name="Arita M."/>
            <person name="Imose N."/>
            <person name="Musashino K."/>
            <person name="Yuuki H."/>
            <person name="Oshima A."/>
            <person name="Sasaki N."/>
            <person name="Aotsuka S."/>
            <person name="Yoshikawa Y."/>
            <person name="Matsunawa H."/>
            <person name="Ichihara T."/>
            <person name="Shiohata N."/>
            <person name="Sano S."/>
            <person name="Moriya S."/>
            <person name="Momiyama H."/>
            <person name="Satoh N."/>
            <person name="Takami S."/>
            <person name="Terashima Y."/>
            <person name="Suzuki O."/>
            <person name="Nakagawa S."/>
            <person name="Senoh A."/>
            <person name="Mizoguchi H."/>
            <person name="Goto Y."/>
            <person name="Shimizu F."/>
            <person name="Wakebe H."/>
            <person name="Hishigaki H."/>
            <person name="Watanabe T."/>
            <person name="Sugiyama A."/>
            <person name="Takemoto M."/>
            <person name="Kawakami B."/>
            <person name="Yamazaki M."/>
            <person name="Watanabe K."/>
            <person name="Kumagai A."/>
            <person name="Itakura S."/>
            <person name="Fukuzumi Y."/>
            <person name="Fujimori Y."/>
            <person name="Komiyama M."/>
            <person name="Tashiro H."/>
            <person name="Tanigami A."/>
            <person name="Fujiwara T."/>
            <person name="Ono T."/>
            <person name="Yamada K."/>
            <person name="Fujii Y."/>
            <person name="Ozaki K."/>
            <person name="Hirao M."/>
            <person name="Ohmori Y."/>
            <person name="Kawabata A."/>
            <person name="Hikiji T."/>
            <person name="Kobatake N."/>
            <person name="Inagaki H."/>
            <person name="Ikema Y."/>
            <person name="Okamoto S."/>
            <person name="Okitani R."/>
            <person name="Kawakami T."/>
            <person name="Noguchi S."/>
            <person name="Itoh T."/>
            <person name="Shigeta K."/>
            <person name="Senba T."/>
            <person name="Matsumura K."/>
            <person name="Nakajima Y."/>
            <person name="Mizuno T."/>
            <person name="Morinaga M."/>
            <person name="Sasaki M."/>
            <person name="Togashi T."/>
            <person name="Oyama M."/>
            <person name="Hata H."/>
            <person name="Watanabe M."/>
            <person name="Komatsu T."/>
            <person name="Mizushima-Sugano J."/>
            <person name="Satoh T."/>
            <person name="Shirai Y."/>
            <person name="Takahashi Y."/>
            <person name="Nakagawa K."/>
            <person name="Okumura K."/>
            <person name="Nagase T."/>
            <person name="Nomura N."/>
            <person name="Kikuchi H."/>
            <person name="Masuho Y."/>
            <person name="Yamashita R."/>
            <person name="Nakai K."/>
            <person name="Yada T."/>
            <person name="Nakamura Y."/>
            <person name="Ohara O."/>
            <person name="Isogai T."/>
            <person name="Sugano S."/>
        </authorList>
    </citation>
    <scope>NUCLEOTIDE SEQUENCE [LARGE SCALE MRNA] OF 118-314 (ISOFORM 2)</scope>
</reference>
<reference key="7">
    <citation type="journal article" date="2002" name="Biochem. Biophys. Res. Commun.">
        <title>Mammalian Apg12p, but not the Apg12p.Apg5p conjugate, facilitates LC3 processing.</title>
        <authorList>
            <person name="Tanida I."/>
            <person name="Nishitani T."/>
            <person name="Nemoto T."/>
            <person name="Ueno T."/>
            <person name="Kominami E."/>
        </authorList>
    </citation>
    <scope>FUNCTION</scope>
    <scope>INTERACTION WITH THE ATG12-ATG5 CONJUGATE AND ATG12</scope>
</reference>
<reference key="8">
    <citation type="journal article" date="2003" name="J. Biol. Chem.">
        <title>The mouse APG10 homologue, an E2-like enzyme for Apg12p conjugation, facilitates MAP-LC3 modification.</title>
        <authorList>
            <person name="Nemoto T."/>
            <person name="Tanida I."/>
            <person name="Tanida-Miyake E."/>
            <person name="Minematsu-Ikeguchi N."/>
            <person name="Yokota M."/>
            <person name="Ohsumi M."/>
            <person name="Ueno T."/>
            <person name="Kominami E."/>
        </authorList>
    </citation>
    <scope>FUNCTION</scope>
</reference>
<reference key="9">
    <citation type="journal article" date="2004" name="Anal. Chem.">
        <title>Robust phosphoproteomic profiling of tyrosine phosphorylation sites from human T cells using immobilized metal affinity chromatography and tandem mass spectrometry.</title>
        <authorList>
            <person name="Brill L.M."/>
            <person name="Salomon A.R."/>
            <person name="Ficarro S.B."/>
            <person name="Mukherji M."/>
            <person name="Stettler-Gill M."/>
            <person name="Peters E.C."/>
        </authorList>
    </citation>
    <scope>IDENTIFICATION BY MASS SPECTROMETRY [LARGE SCALE ANALYSIS]</scope>
    <source>
        <tissue>Leukemic T-cell</tissue>
    </source>
</reference>
<reference key="10">
    <citation type="journal article" date="2005" name="Nat. Biotechnol.">
        <title>Immunoaffinity profiling of tyrosine phosphorylation in cancer cells.</title>
        <authorList>
            <person name="Rush J."/>
            <person name="Moritz A."/>
            <person name="Lee K.A."/>
            <person name="Guo A."/>
            <person name="Goss V.L."/>
            <person name="Spek E.J."/>
            <person name="Zhang H."/>
            <person name="Zha X.-M."/>
            <person name="Polakiewicz R.D."/>
            <person name="Comb M.J."/>
        </authorList>
    </citation>
    <scope>IDENTIFICATION BY MASS SPECTROMETRY [LARGE SCALE ANALYSIS]</scope>
</reference>
<reference key="11">
    <citation type="journal article" date="2006" name="FEBS J.">
        <title>Atg8L/Apg8L is the fourth mammalian modifier of mammalian Atg8 conjugation mediated by human Atg4B, Atg7 and Atg3.</title>
        <authorList>
            <person name="Tanida I."/>
            <person name="Sou Y.S."/>
            <person name="Minematsu-Ikeguchi N."/>
            <person name="Ueno T."/>
            <person name="Kominami E."/>
        </authorList>
    </citation>
    <scope>FUNCTION</scope>
</reference>
<reference key="12">
    <citation type="journal article" date="2009" name="Anal. Chem.">
        <title>Lys-N and trypsin cover complementary parts of the phosphoproteome in a refined SCX-based approach.</title>
        <authorList>
            <person name="Gauci S."/>
            <person name="Helbig A.O."/>
            <person name="Slijper M."/>
            <person name="Krijgsveld J."/>
            <person name="Heck A.J."/>
            <person name="Mohammed S."/>
        </authorList>
    </citation>
    <scope>ACETYLATION [LARGE SCALE ANALYSIS] AT MET-1</scope>
    <scope>IDENTIFICATION BY MASS SPECTROMETRY [LARGE SCALE ANALYSIS]</scope>
</reference>
<reference key="13">
    <citation type="journal article" date="2009" name="J. Immunol.">
        <title>A novel hybrid yeast-human network analysis reveals an essential role for FNBP1L in antibacterial autophagy.</title>
        <authorList>
            <person name="Huett A."/>
            <person name="Ng A."/>
            <person name="Cao Z."/>
            <person name="Kuballa P."/>
            <person name="Komatsu M."/>
            <person name="Daly M.J."/>
            <person name="Podolsky D.K."/>
            <person name="Xavier R.J."/>
        </authorList>
    </citation>
    <scope>INTERACTION WITH FNBP1L</scope>
</reference>
<reference key="14">
    <citation type="journal article" date="2011" name="BMC Syst. Biol.">
        <title>Initial characterization of the human central proteome.</title>
        <authorList>
            <person name="Burkard T.R."/>
            <person name="Planyavsky M."/>
            <person name="Kaupe I."/>
            <person name="Breitwieser F.P."/>
            <person name="Buerckstuemmer T."/>
            <person name="Bennett K.L."/>
            <person name="Superti-Furga G."/>
            <person name="Colinge J."/>
        </authorList>
    </citation>
    <scope>IDENTIFICATION BY MASS SPECTROMETRY [LARGE SCALE ANALYSIS]</scope>
</reference>
<reference key="15">
    <citation type="journal article" date="2012" name="Apoptosis">
        <title>Cleavage of Atg3 protein by caspase-8 regulates autophagy during receptor-activated cell death.</title>
        <authorList>
            <person name="Oral O."/>
            <person name="Oz-Arslan D."/>
            <person name="Itah Z."/>
            <person name="Naghavi A."/>
            <person name="Deveci R."/>
            <person name="Karacali S."/>
            <person name="Gozuacik D."/>
        </authorList>
    </citation>
    <scope>MOTIF</scope>
    <scope>PTM</scope>
    <scope>CLEAVAGE BY CASP8</scope>
</reference>
<reference key="16">
    <citation type="journal article" date="2012" name="Autophagy">
        <title>The FAP motif within human ATG7, an autophagy-related E1-like enzyme, is essential for the E2-substrate reaction of LC3 lipidation.</title>
        <authorList>
            <person name="Tanida I."/>
            <person name="Yamasaki M."/>
            <person name="Komatsu M."/>
            <person name="Ueno T."/>
        </authorList>
    </citation>
    <scope>INTERACTION WITH ATG7 AND ATG12</scope>
</reference>
<reference key="17">
    <citation type="journal article" date="2012" name="Mol. Cell. Proteomics">
        <title>Comparative large-scale characterisation of plant vs. mammal proteins reveals similar and idiosyncratic N-alpha acetylation features.</title>
        <authorList>
            <person name="Bienvenut W.V."/>
            <person name="Sumpton D."/>
            <person name="Martinez A."/>
            <person name="Lilla S."/>
            <person name="Espagne C."/>
            <person name="Meinnel T."/>
            <person name="Giglione C."/>
        </authorList>
    </citation>
    <scope>ACETYLATION [LARGE SCALE ANALYSIS] AT MET-1</scope>
    <scope>IDENTIFICATION BY MASS SPECTROMETRY [LARGE SCALE ANALYSIS]</scope>
</reference>
<reference key="18">
    <citation type="journal article" date="2013" name="Protein Sci.">
        <title>Binding to E1 and E3 is mutually exclusive for the human autophagy E2 Atg3.</title>
        <authorList>
            <person name="Qiu Y."/>
            <person name="Hofmann K."/>
            <person name="Coats J.E."/>
            <person name="Schulman B.A."/>
            <person name="Kaiser S.E."/>
        </authorList>
    </citation>
    <scope>FUNCTION</scope>
    <scope>INTERACTION WITH ATG7; ATG12; ATG5 AND ATG16L1</scope>
</reference>
<reference key="19">
    <citation type="journal article" date="2015" name="Biochem. Biophys. Res. Commun.">
        <title>Identification and characterization of the linear region of ATG3 that interacts with ATG7 in higher eukaryotes.</title>
        <authorList>
            <person name="Ohashi K."/>
            <person name="Otomo T."/>
        </authorList>
    </citation>
    <scope>INTERACTION WITH ATG7</scope>
    <scope>MUTAGENESIS OF ASP-156; MET-157; TYR-160; GLU-167; ASP-169; ALA-171; THR-172 AND LEU-173</scope>
</reference>
<reference key="20">
    <citation type="journal article" date="2017" name="Sci. Rep.">
        <title>Human ATG3 binding to lipid bilayers: role of lipid geometry, and electric charge.</title>
        <authorList>
            <person name="Hervas J.H."/>
            <person name="Landajuela A."/>
            <person name="Anton Z."/>
            <person name="Shnyrova A.V."/>
            <person name="Goni F.M."/>
            <person name="Alonso A."/>
        </authorList>
    </citation>
    <scope>FUNCTION</scope>
    <scope>MUTAGENESIS OF LYS-9 AND LYS-11</scope>
</reference>
<reference key="21">
    <citation type="journal article" date="2021" name="Nat. Commun.">
        <title>An N-terminal conserved region in human Atg3 couples membrane curvature sensitivity to conjugase activity during autophagy.</title>
        <authorList>
            <person name="Ye Y."/>
            <person name="Tyndall E.R."/>
            <person name="Bui V."/>
            <person name="Tang Z."/>
            <person name="Shen Y."/>
            <person name="Jiang X."/>
            <person name="Flanagan J.M."/>
            <person name="Wang H.G."/>
            <person name="Tian F."/>
        </authorList>
    </citation>
    <scope>FUNCTION</scope>
    <scope>DOMAIN</scope>
    <scope>MUTAGENESIS OF VAL-8; VAL-15; PRO-21; LEU-23 AND GLU-25</scope>
</reference>
<reference evidence="22" key="22">
    <citation type="journal article" date="2013" name="Proc. Natl. Acad. Sci. U.S.A.">
        <title>Structural basis of ATG3 recognition by the autophagic ubiquitin-like protein ATG12.</title>
        <authorList>
            <person name="Metlagel Z."/>
            <person name="Otomo C."/>
            <person name="Takaesu G."/>
            <person name="Otomo T."/>
        </authorList>
    </citation>
    <scope>X-RAY CRYSTALLOGRAPHY (2.19 ANGSTROMS) OF 140-170 IN COMPLEX WITH ATG12; ATG5 AND ATG16L1</scope>
    <scope>FUNCTION</scope>
    <scope>SUBUNIT</scope>
    <scope>INTERACTION WITH ATG12</scope>
    <scope>REGION</scope>
    <scope>MUTAGENESIS OF 144-GLU--GLU-151; ASP-156; MET-157; TYR-160; GLU-161 AND CYS-264</scope>
</reference>
<reference evidence="23" key="23">
    <citation type="journal article" date="2023" name="ACS Cent. Sci.">
        <title>Semisynthetic LC3 Probes for Autophagy Pathways Reveal a Noncanonical LC3 Interacting Region Motif Crucial for the Enzymatic Activity of Human ATG3.</title>
        <authorList>
            <person name="Farnung J."/>
            <person name="Muhar M."/>
            <person name="Liang J.R."/>
            <person name="Tolmachova K.A."/>
            <person name="Benoit R.M."/>
            <person name="Corn J.E."/>
            <person name="Bode J.W."/>
        </authorList>
    </citation>
    <scope>X-RAY CRYSTALLOGRAPHY (2.66 ANGSTROMS) OF 90-113 IN COMPLEX WITH GABARAP</scope>
    <scope>FUNCTION</scope>
    <scope>MOTIF</scope>
    <scope>INTERACTION WITH GABARAP; MAP1LC3A; ATG12-ATG5 CONJUGATE; ATG16L1 AND ATG7</scope>
    <scope>DOMAIN</scope>
    <scope>MUTAGENESIS OF GLU-95; ILE-97; TRP-107; VAL-108 AND CYS-264</scope>
</reference>